<evidence type="ECO:0000250" key="1">
    <source>
        <dbReference type="UniProtKB" id="Q654D9"/>
    </source>
</evidence>
<evidence type="ECO:0000255" key="2"/>
<evidence type="ECO:0000256" key="3">
    <source>
        <dbReference type="SAM" id="MobiDB-lite"/>
    </source>
</evidence>
<evidence type="ECO:0000305" key="4"/>
<evidence type="ECO:0000312" key="5">
    <source>
        <dbReference type="EMBL" id="EEC82308.1"/>
    </source>
</evidence>
<evidence type="ECO:0000312" key="6">
    <source>
        <dbReference type="Proteomes" id="UP000007015"/>
    </source>
</evidence>
<name>CSTR2_ORYSI</name>
<gene>
    <name evidence="4" type="primary">CSTLP2</name>
    <name evidence="5" type="ORF">OsI_26569</name>
</gene>
<comment type="function">
    <text evidence="1">Sugar transporter involved in the transport of CMP-sialic acid from the cytoplasm into the Golgi. May transport important nucleotide sugars such as CMP-Kdo (2-keto-3-deoxy-D-manno-octulosonic acid) in physiological conditions.</text>
</comment>
<comment type="subcellular location">
    <subcellularLocation>
        <location evidence="4">Golgi apparatus membrane</location>
        <topology evidence="4">Multi-pass membrane protein</topology>
    </subcellularLocation>
</comment>
<comment type="similarity">
    <text evidence="4">Belongs to the nucleotide-sugar transporter family. CMP-Sialate:CMP antiporter (TC 2.A.7.12) subfamily.</text>
</comment>
<dbReference type="EMBL" id="CM000132">
    <property type="protein sequence ID" value="EEC82308.1"/>
    <property type="molecule type" value="Genomic_DNA"/>
</dbReference>
<dbReference type="SMR" id="B8B7Q4"/>
<dbReference type="STRING" id="39946.B8B7Q4"/>
<dbReference type="EnsemblPlants" id="BGIOSGA024044-TA">
    <property type="protein sequence ID" value="BGIOSGA024044-PA"/>
    <property type="gene ID" value="BGIOSGA024044"/>
</dbReference>
<dbReference type="EnsemblPlants" id="OsIR64_07g0020740.01">
    <property type="protein sequence ID" value="OsIR64_07g0020740.01"/>
    <property type="gene ID" value="OsIR64_07g0020740"/>
</dbReference>
<dbReference type="EnsemblPlants" id="OsKYG_07g0020190.01">
    <property type="protein sequence ID" value="OsKYG_07g0020190.01"/>
    <property type="gene ID" value="OsKYG_07g0020190"/>
</dbReference>
<dbReference type="EnsemblPlants" id="OsLaMu_07g0020050.01">
    <property type="protein sequence ID" value="OsLaMu_07g0020050.01"/>
    <property type="gene ID" value="OsLaMu_07g0020050"/>
</dbReference>
<dbReference type="EnsemblPlants" id="OsLiXu_07g0020310.01">
    <property type="protein sequence ID" value="OsLiXu_07g0020310.01"/>
    <property type="gene ID" value="OsLiXu_07g0020310"/>
</dbReference>
<dbReference type="EnsemblPlants" id="OsMH63_07G019980_01">
    <property type="protein sequence ID" value="OsMH63_07G019980_01"/>
    <property type="gene ID" value="OsMH63_07G019980"/>
</dbReference>
<dbReference type="EnsemblPlants" id="OsPr106_07g0020290.01">
    <property type="protein sequence ID" value="OsPr106_07g0020290.01"/>
    <property type="gene ID" value="OsPr106_07g0020290"/>
</dbReference>
<dbReference type="EnsemblPlants" id="OsZS97_07G019920_01">
    <property type="protein sequence ID" value="OsZS97_07G019920_01"/>
    <property type="gene ID" value="OsZS97_07G019920"/>
</dbReference>
<dbReference type="Gramene" id="BGIOSGA024044-TA">
    <property type="protein sequence ID" value="BGIOSGA024044-PA"/>
    <property type="gene ID" value="BGIOSGA024044"/>
</dbReference>
<dbReference type="Gramene" id="OsIR64_07g0020740.01">
    <property type="protein sequence ID" value="OsIR64_07g0020740.01"/>
    <property type="gene ID" value="OsIR64_07g0020740"/>
</dbReference>
<dbReference type="Gramene" id="OsKYG_07g0020190.01">
    <property type="protein sequence ID" value="OsKYG_07g0020190.01"/>
    <property type="gene ID" value="OsKYG_07g0020190"/>
</dbReference>
<dbReference type="Gramene" id="OsLaMu_07g0020050.01">
    <property type="protein sequence ID" value="OsLaMu_07g0020050.01"/>
    <property type="gene ID" value="OsLaMu_07g0020050"/>
</dbReference>
<dbReference type="Gramene" id="OsLiXu_07g0020310.01">
    <property type="protein sequence ID" value="OsLiXu_07g0020310.01"/>
    <property type="gene ID" value="OsLiXu_07g0020310"/>
</dbReference>
<dbReference type="Gramene" id="OsMH63_07G019980_01">
    <property type="protein sequence ID" value="OsMH63_07G019980_01"/>
    <property type="gene ID" value="OsMH63_07G019980"/>
</dbReference>
<dbReference type="Gramene" id="OsPr106_07g0020290.01">
    <property type="protein sequence ID" value="OsPr106_07g0020290.01"/>
    <property type="gene ID" value="OsPr106_07g0020290"/>
</dbReference>
<dbReference type="Gramene" id="OsZS97_07G019920_01">
    <property type="protein sequence ID" value="OsZS97_07G019920_01"/>
    <property type="gene ID" value="OsZS97_07G019920"/>
</dbReference>
<dbReference type="HOGENOM" id="CLU_024645_5_0_1"/>
<dbReference type="OMA" id="KCYVIAS"/>
<dbReference type="Proteomes" id="UP000007015">
    <property type="component" value="Chromosome 7"/>
</dbReference>
<dbReference type="GO" id="GO:0000139">
    <property type="term" value="C:Golgi membrane"/>
    <property type="evidence" value="ECO:0007669"/>
    <property type="project" value="UniProtKB-SubCell"/>
</dbReference>
<dbReference type="GO" id="GO:0015165">
    <property type="term" value="F:pyrimidine nucleotide-sugar transmembrane transporter activity"/>
    <property type="evidence" value="ECO:0007669"/>
    <property type="project" value="InterPro"/>
</dbReference>
<dbReference type="InterPro" id="IPR007271">
    <property type="entry name" value="Nuc_sug_transpt"/>
</dbReference>
<dbReference type="NCBIfam" id="TIGR00803">
    <property type="entry name" value="nst"/>
    <property type="match status" value="1"/>
</dbReference>
<dbReference type="PANTHER" id="PTHR10231">
    <property type="entry name" value="NUCLEOTIDE-SUGAR TRANSMEMBRANE TRANSPORTER"/>
    <property type="match status" value="1"/>
</dbReference>
<dbReference type="Pfam" id="PF04142">
    <property type="entry name" value="Nuc_sug_transp"/>
    <property type="match status" value="1"/>
</dbReference>
<dbReference type="PIRSF" id="PIRSF005799">
    <property type="entry name" value="UDP-gal_transpt"/>
    <property type="match status" value="1"/>
</dbReference>
<dbReference type="SUPFAM" id="SSF103481">
    <property type="entry name" value="Multidrug resistance efflux transporter EmrE"/>
    <property type="match status" value="1"/>
</dbReference>
<keyword id="KW-0333">Golgi apparatus</keyword>
<keyword id="KW-0472">Membrane</keyword>
<keyword id="KW-1185">Reference proteome</keyword>
<keyword id="KW-0762">Sugar transport</keyword>
<keyword id="KW-0812">Transmembrane</keyword>
<keyword id="KW-1133">Transmembrane helix</keyword>
<keyword id="KW-0813">Transport</keyword>
<accession>B8B7Q4</accession>
<reference key="1">
    <citation type="journal article" date="2002" name="Nature">
        <title>Sequence and analysis of rice chromosome 4.</title>
        <authorList>
            <person name="Feng Q."/>
            <person name="Zhang Y."/>
            <person name="Hao P."/>
            <person name="Wang S."/>
            <person name="Fu G."/>
            <person name="Huang Y."/>
            <person name="Li Y."/>
            <person name="Zhu J."/>
            <person name="Liu Y."/>
            <person name="Hu X."/>
            <person name="Jia P."/>
            <person name="Zhang Y."/>
            <person name="Zhao Q."/>
            <person name="Ying K."/>
            <person name="Yu S."/>
            <person name="Tang Y."/>
            <person name="Weng Q."/>
            <person name="Zhang L."/>
            <person name="Lu Y."/>
            <person name="Mu J."/>
            <person name="Lu Y."/>
            <person name="Zhang L.S."/>
            <person name="Yu Z."/>
            <person name="Fan D."/>
            <person name="Liu X."/>
            <person name="Lu T."/>
            <person name="Li C."/>
            <person name="Wu Y."/>
            <person name="Sun T."/>
            <person name="Lei H."/>
            <person name="Li T."/>
            <person name="Hu H."/>
            <person name="Guan J."/>
            <person name="Wu M."/>
            <person name="Zhang R."/>
            <person name="Zhou B."/>
            <person name="Chen Z."/>
            <person name="Chen L."/>
            <person name="Jin Z."/>
            <person name="Wang R."/>
            <person name="Yin H."/>
            <person name="Cai Z."/>
            <person name="Ren S."/>
            <person name="Lv G."/>
            <person name="Gu W."/>
            <person name="Zhu G."/>
            <person name="Tu Y."/>
            <person name="Jia J."/>
            <person name="Zhang Y."/>
            <person name="Chen J."/>
            <person name="Kang H."/>
            <person name="Chen X."/>
            <person name="Shao C."/>
            <person name="Sun Y."/>
            <person name="Hu Q."/>
            <person name="Zhang X."/>
            <person name="Zhang W."/>
            <person name="Wang L."/>
            <person name="Ding C."/>
            <person name="Sheng H."/>
            <person name="Gu J."/>
            <person name="Chen S."/>
            <person name="Ni L."/>
            <person name="Zhu F."/>
            <person name="Chen W."/>
            <person name="Lan L."/>
            <person name="Lai Y."/>
            <person name="Cheng Z."/>
            <person name="Gu M."/>
            <person name="Jiang J."/>
            <person name="Li J."/>
            <person name="Hong G."/>
            <person name="Xue Y."/>
            <person name="Han B."/>
        </authorList>
    </citation>
    <scope>NUCLEOTIDE SEQUENCE [LARGE SCALE GENOMIC DNA]</scope>
    <source>
        <strain evidence="6">cv. 93-11</strain>
        <strain>cv. Guang-Lu-Ai No.4</strain>
    </source>
</reference>
<sequence>MEYRRVKDQESYDVVSQKDIESPGERSLSSTSATSSLSTAGASKGNNSWKLKSIVTLALTLLTSSQAILIVWSKRAGKYEYSVTTANFSVEALKCLLSLIALYRTWNSQGVTEDNRLSTSFDEVSVYPIPAILYMVKNLLQYYIFAYVDAPAYQILKNLNIISTGVLYRIILKKKLSEIQWAAFILLCAGCTTAQLNPSSDHVLQTPIQGWVMAIVMALLSGFAGVYTEAIIKKRPSRNINVQNFWLYIFGMLFNLVAICVQDFDAVMNKGFFHGYSFITVLMILNHALSGIAVSMVMKYADNIVKVYSTSVAMLLTAVVSVFLFGFHLSLAFFLGSTVVSVSVYLHSVGKPQPQK</sequence>
<feature type="chain" id="PRO_0000434340" description="CMP-sialic acid transporter 2">
    <location>
        <begin position="1"/>
        <end position="356"/>
    </location>
</feature>
<feature type="topological domain" description="Cytoplasmic" evidence="4">
    <location>
        <begin position="1"/>
        <end position="52"/>
    </location>
</feature>
<feature type="transmembrane region" description="Helical" evidence="2">
    <location>
        <begin position="53"/>
        <end position="73"/>
    </location>
</feature>
<feature type="topological domain" description="Lumenal" evidence="4">
    <location>
        <begin position="74"/>
        <end position="82"/>
    </location>
</feature>
<feature type="transmembrane region" description="Helical" evidence="2">
    <location>
        <begin position="83"/>
        <end position="103"/>
    </location>
</feature>
<feature type="topological domain" description="Cytoplasmic" evidence="4">
    <location>
        <begin position="104"/>
        <end position="125"/>
    </location>
</feature>
<feature type="transmembrane region" description="Helical" evidence="2">
    <location>
        <begin position="126"/>
        <end position="146"/>
    </location>
</feature>
<feature type="topological domain" description="Lumenal" evidence="4">
    <location>
        <begin position="147"/>
        <end position="149"/>
    </location>
</feature>
<feature type="transmembrane region" description="Helical" evidence="2">
    <location>
        <begin position="150"/>
        <end position="172"/>
    </location>
</feature>
<feature type="topological domain" description="Cytoplasmic" evidence="4">
    <location>
        <begin position="173"/>
        <end position="175"/>
    </location>
</feature>
<feature type="transmembrane region" description="Helical" evidence="2">
    <location>
        <begin position="176"/>
        <end position="196"/>
    </location>
</feature>
<feature type="topological domain" description="Lumenal" evidence="4">
    <location>
        <begin position="197"/>
        <end position="211"/>
    </location>
</feature>
<feature type="transmembrane region" description="Helical" evidence="2">
    <location>
        <begin position="212"/>
        <end position="232"/>
    </location>
</feature>
<feature type="topological domain" description="Cytoplasmic" evidence="4">
    <location>
        <begin position="233"/>
        <end position="239"/>
    </location>
</feature>
<feature type="transmembrane region" description="Helical" evidence="2">
    <location>
        <begin position="240"/>
        <end position="260"/>
    </location>
</feature>
<feature type="topological domain" description="Lumenal" evidence="4">
    <location>
        <begin position="261"/>
        <end position="277"/>
    </location>
</feature>
<feature type="transmembrane region" description="Helical" evidence="2">
    <location>
        <begin position="278"/>
        <end position="298"/>
    </location>
</feature>
<feature type="topological domain" description="Cytoplasmic" evidence="4">
    <location>
        <begin position="299"/>
        <end position="314"/>
    </location>
</feature>
<feature type="transmembrane region" description="Helical" evidence="2">
    <location>
        <begin position="315"/>
        <end position="335"/>
    </location>
</feature>
<feature type="topological domain" description="Lumenal" evidence="4">
    <location>
        <begin position="336"/>
        <end position="356"/>
    </location>
</feature>
<feature type="region of interest" description="Disordered" evidence="3">
    <location>
        <begin position="1"/>
        <end position="43"/>
    </location>
</feature>
<feature type="compositionally biased region" description="Basic and acidic residues" evidence="3">
    <location>
        <begin position="1"/>
        <end position="24"/>
    </location>
</feature>
<feature type="compositionally biased region" description="Low complexity" evidence="3">
    <location>
        <begin position="27"/>
        <end position="43"/>
    </location>
</feature>
<protein>
    <recommendedName>
        <fullName evidence="4">CMP-sialic acid transporter 2</fullName>
        <shortName evidence="4">CMP-SA-Tr 2</shortName>
        <shortName evidence="4">CMP-Sia-Tr 2</shortName>
    </recommendedName>
    <alternativeName>
        <fullName evidence="4">CMP-sialic acid transporter-like protein 2</fullName>
    </alternativeName>
</protein>
<organism>
    <name type="scientific">Oryza sativa subsp. indica</name>
    <name type="common">Rice</name>
    <dbReference type="NCBI Taxonomy" id="39946"/>
    <lineage>
        <taxon>Eukaryota</taxon>
        <taxon>Viridiplantae</taxon>
        <taxon>Streptophyta</taxon>
        <taxon>Embryophyta</taxon>
        <taxon>Tracheophyta</taxon>
        <taxon>Spermatophyta</taxon>
        <taxon>Magnoliopsida</taxon>
        <taxon>Liliopsida</taxon>
        <taxon>Poales</taxon>
        <taxon>Poaceae</taxon>
        <taxon>BOP clade</taxon>
        <taxon>Oryzoideae</taxon>
        <taxon>Oryzeae</taxon>
        <taxon>Oryzinae</taxon>
        <taxon>Oryza</taxon>
        <taxon>Oryza sativa</taxon>
    </lineage>
</organism>
<proteinExistence type="inferred from homology"/>